<protein>
    <recommendedName>
        <fullName evidence="1">Hydroxyethylthiazole kinase</fullName>
        <ecNumber evidence="1">2.7.1.50</ecNumber>
    </recommendedName>
    <alternativeName>
        <fullName evidence="1">4-methyl-5-beta-hydroxyethylthiazole kinase</fullName>
        <shortName evidence="1">TH kinase</shortName>
        <shortName evidence="1">Thz kinase</shortName>
    </alternativeName>
</protein>
<accession>Q6FAS9</accession>
<evidence type="ECO:0000255" key="1">
    <source>
        <dbReference type="HAMAP-Rule" id="MF_00228"/>
    </source>
</evidence>
<comment type="function">
    <text evidence="1">Catalyzes the phosphorylation of the hydroxyl group of 4-methyl-5-beta-hydroxyethylthiazole (THZ).</text>
</comment>
<comment type="catalytic activity">
    <reaction evidence="1">
        <text>5-(2-hydroxyethyl)-4-methylthiazole + ATP = 4-methyl-5-(2-phosphooxyethyl)-thiazole + ADP + H(+)</text>
        <dbReference type="Rhea" id="RHEA:24212"/>
        <dbReference type="ChEBI" id="CHEBI:15378"/>
        <dbReference type="ChEBI" id="CHEBI:17957"/>
        <dbReference type="ChEBI" id="CHEBI:30616"/>
        <dbReference type="ChEBI" id="CHEBI:58296"/>
        <dbReference type="ChEBI" id="CHEBI:456216"/>
        <dbReference type="EC" id="2.7.1.50"/>
    </reaction>
</comment>
<comment type="cofactor">
    <cofactor evidence="1">
        <name>Mg(2+)</name>
        <dbReference type="ChEBI" id="CHEBI:18420"/>
    </cofactor>
</comment>
<comment type="pathway">
    <text evidence="1">Cofactor biosynthesis; thiamine diphosphate biosynthesis; 4-methyl-5-(2-phosphoethyl)-thiazole from 5-(2-hydroxyethyl)-4-methylthiazole: step 1/1.</text>
</comment>
<comment type="similarity">
    <text evidence="1">Belongs to the Thz kinase family.</text>
</comment>
<dbReference type="EC" id="2.7.1.50" evidence="1"/>
<dbReference type="EMBL" id="CR543861">
    <property type="protein sequence ID" value="CAG68834.1"/>
    <property type="molecule type" value="Genomic_DNA"/>
</dbReference>
<dbReference type="RefSeq" id="WP_004927382.1">
    <property type="nucleotide sequence ID" value="NC_005966.1"/>
</dbReference>
<dbReference type="SMR" id="Q6FAS9"/>
<dbReference type="STRING" id="202950.GCA_001485005_00360"/>
<dbReference type="GeneID" id="45234371"/>
<dbReference type="KEGG" id="aci:ACIAD2011"/>
<dbReference type="eggNOG" id="COG2145">
    <property type="taxonomic scope" value="Bacteria"/>
</dbReference>
<dbReference type="HOGENOM" id="CLU_019943_0_1_6"/>
<dbReference type="OrthoDB" id="8909021at2"/>
<dbReference type="BioCyc" id="ASP62977:ACIAD_RS09260-MONOMER"/>
<dbReference type="UniPathway" id="UPA00060">
    <property type="reaction ID" value="UER00139"/>
</dbReference>
<dbReference type="Proteomes" id="UP000000430">
    <property type="component" value="Chromosome"/>
</dbReference>
<dbReference type="GO" id="GO:0005524">
    <property type="term" value="F:ATP binding"/>
    <property type="evidence" value="ECO:0007669"/>
    <property type="project" value="UniProtKB-UniRule"/>
</dbReference>
<dbReference type="GO" id="GO:0004417">
    <property type="term" value="F:hydroxyethylthiazole kinase activity"/>
    <property type="evidence" value="ECO:0007669"/>
    <property type="project" value="UniProtKB-UniRule"/>
</dbReference>
<dbReference type="GO" id="GO:0000287">
    <property type="term" value="F:magnesium ion binding"/>
    <property type="evidence" value="ECO:0007669"/>
    <property type="project" value="UniProtKB-UniRule"/>
</dbReference>
<dbReference type="GO" id="GO:0009228">
    <property type="term" value="P:thiamine biosynthetic process"/>
    <property type="evidence" value="ECO:0007669"/>
    <property type="project" value="UniProtKB-KW"/>
</dbReference>
<dbReference type="GO" id="GO:0009229">
    <property type="term" value="P:thiamine diphosphate biosynthetic process"/>
    <property type="evidence" value="ECO:0007669"/>
    <property type="project" value="UniProtKB-UniRule"/>
</dbReference>
<dbReference type="CDD" id="cd01170">
    <property type="entry name" value="THZ_kinase"/>
    <property type="match status" value="1"/>
</dbReference>
<dbReference type="Gene3D" id="3.40.1190.20">
    <property type="match status" value="1"/>
</dbReference>
<dbReference type="HAMAP" id="MF_00228">
    <property type="entry name" value="Thz_kinase"/>
    <property type="match status" value="1"/>
</dbReference>
<dbReference type="InterPro" id="IPR000417">
    <property type="entry name" value="Hyethyz_kinase"/>
</dbReference>
<dbReference type="InterPro" id="IPR029056">
    <property type="entry name" value="Ribokinase-like"/>
</dbReference>
<dbReference type="NCBIfam" id="NF006830">
    <property type="entry name" value="PRK09355.1"/>
    <property type="match status" value="1"/>
</dbReference>
<dbReference type="Pfam" id="PF02110">
    <property type="entry name" value="HK"/>
    <property type="match status" value="1"/>
</dbReference>
<dbReference type="PIRSF" id="PIRSF000513">
    <property type="entry name" value="Thz_kinase"/>
    <property type="match status" value="1"/>
</dbReference>
<dbReference type="PRINTS" id="PR01099">
    <property type="entry name" value="HYETHTZKNASE"/>
</dbReference>
<dbReference type="SUPFAM" id="SSF53613">
    <property type="entry name" value="Ribokinase-like"/>
    <property type="match status" value="1"/>
</dbReference>
<reference key="1">
    <citation type="journal article" date="2004" name="Nucleic Acids Res.">
        <title>Unique features revealed by the genome sequence of Acinetobacter sp. ADP1, a versatile and naturally transformation competent bacterium.</title>
        <authorList>
            <person name="Barbe V."/>
            <person name="Vallenet D."/>
            <person name="Fonknechten N."/>
            <person name="Kreimeyer A."/>
            <person name="Oztas S."/>
            <person name="Labarre L."/>
            <person name="Cruveiller S."/>
            <person name="Robert C."/>
            <person name="Duprat S."/>
            <person name="Wincker P."/>
            <person name="Ornston L.N."/>
            <person name="Weissenbach J."/>
            <person name="Marliere P."/>
            <person name="Cohen G.N."/>
            <person name="Medigue C."/>
        </authorList>
    </citation>
    <scope>NUCLEOTIDE SEQUENCE [LARGE SCALE GENOMIC DNA]</scope>
    <source>
        <strain>ATCC 33305 / BD413 / ADP1</strain>
    </source>
</reference>
<sequence length="274" mass="29467">MYNSSNIIDYVIDAWEKLQEQAPLVQCITNSVAANYAANVLLAAGASPAMIDNPFEARSFTEISGALSINVGTPTTEQIQAMQISAKTAHEHDIPWVLDPVGYGPILKWRSDMVDELLQYHPSVIRGNASEIGALAGSLVQSKGVDSTLKSDEMFQLAHNLLTKTSCVAISGETDYILSNAMTCIVKVRGGSHLQPKITATGCALGTLIAAYCAVAPVHLATIAAHIHFAIAGKLAYDQAQTIGSFNTMFMDYIHMMDANLIEQYACIELISDD</sequence>
<keyword id="KW-0067">ATP-binding</keyword>
<keyword id="KW-0418">Kinase</keyword>
<keyword id="KW-0460">Magnesium</keyword>
<keyword id="KW-0479">Metal-binding</keyword>
<keyword id="KW-0547">Nucleotide-binding</keyword>
<keyword id="KW-0784">Thiamine biosynthesis</keyword>
<keyword id="KW-0808">Transferase</keyword>
<organism>
    <name type="scientific">Acinetobacter baylyi (strain ATCC 33305 / BD413 / ADP1)</name>
    <dbReference type="NCBI Taxonomy" id="62977"/>
    <lineage>
        <taxon>Bacteria</taxon>
        <taxon>Pseudomonadati</taxon>
        <taxon>Pseudomonadota</taxon>
        <taxon>Gammaproteobacteria</taxon>
        <taxon>Moraxellales</taxon>
        <taxon>Moraxellaceae</taxon>
        <taxon>Acinetobacter</taxon>
    </lineage>
</organism>
<proteinExistence type="inferred from homology"/>
<name>THIM_ACIAD</name>
<gene>
    <name evidence="1" type="primary">thiM</name>
    <name type="ordered locus">ACIAD2011</name>
</gene>
<feature type="chain" id="PRO_0000383816" description="Hydroxyethylthiazole kinase">
    <location>
        <begin position="1"/>
        <end position="274"/>
    </location>
</feature>
<feature type="binding site" evidence="1">
    <location>
        <position position="50"/>
    </location>
    <ligand>
        <name>substrate</name>
    </ligand>
</feature>
<feature type="binding site" evidence="1">
    <location>
        <position position="126"/>
    </location>
    <ligand>
        <name>ATP</name>
        <dbReference type="ChEBI" id="CHEBI:30616"/>
    </ligand>
</feature>
<feature type="binding site" evidence="1">
    <location>
        <position position="171"/>
    </location>
    <ligand>
        <name>ATP</name>
        <dbReference type="ChEBI" id="CHEBI:30616"/>
    </ligand>
</feature>
<feature type="binding site" evidence="1">
    <location>
        <position position="200"/>
    </location>
    <ligand>
        <name>substrate</name>
    </ligand>
</feature>